<dbReference type="EC" id="7.5.2.6" evidence="1"/>
<dbReference type="EMBL" id="CP000127">
    <property type="protein sequence ID" value="ABA59128.1"/>
    <property type="molecule type" value="Genomic_DNA"/>
</dbReference>
<dbReference type="RefSeq" id="WP_011331031.1">
    <property type="nucleotide sequence ID" value="NC_007484.1"/>
</dbReference>
<dbReference type="SMR" id="Q3J7R8"/>
<dbReference type="FunCoup" id="Q3J7R8">
    <property type="interactions" value="387"/>
</dbReference>
<dbReference type="STRING" id="323261.Noc_2675"/>
<dbReference type="KEGG" id="noc:Noc_2675"/>
<dbReference type="eggNOG" id="COG1132">
    <property type="taxonomic scope" value="Bacteria"/>
</dbReference>
<dbReference type="HOGENOM" id="CLU_000604_84_3_6"/>
<dbReference type="InParanoid" id="Q3J7R8"/>
<dbReference type="Proteomes" id="UP000006838">
    <property type="component" value="Chromosome"/>
</dbReference>
<dbReference type="GO" id="GO:0005886">
    <property type="term" value="C:plasma membrane"/>
    <property type="evidence" value="ECO:0007669"/>
    <property type="project" value="UniProtKB-SubCell"/>
</dbReference>
<dbReference type="GO" id="GO:0015421">
    <property type="term" value="F:ABC-type oligopeptide transporter activity"/>
    <property type="evidence" value="ECO:0007669"/>
    <property type="project" value="TreeGrafter"/>
</dbReference>
<dbReference type="GO" id="GO:0005524">
    <property type="term" value="F:ATP binding"/>
    <property type="evidence" value="ECO:0007669"/>
    <property type="project" value="UniProtKB-KW"/>
</dbReference>
<dbReference type="GO" id="GO:0016887">
    <property type="term" value="F:ATP hydrolysis activity"/>
    <property type="evidence" value="ECO:0007669"/>
    <property type="project" value="InterPro"/>
</dbReference>
<dbReference type="GO" id="GO:0034040">
    <property type="term" value="F:ATPase-coupled lipid transmembrane transporter activity"/>
    <property type="evidence" value="ECO:0007669"/>
    <property type="project" value="InterPro"/>
</dbReference>
<dbReference type="CDD" id="cd18552">
    <property type="entry name" value="ABC_6TM_MsbA_like"/>
    <property type="match status" value="1"/>
</dbReference>
<dbReference type="FunFam" id="3.40.50.300:FF:000287">
    <property type="entry name" value="Multidrug ABC transporter ATP-binding protein"/>
    <property type="match status" value="1"/>
</dbReference>
<dbReference type="Gene3D" id="1.20.1560.10">
    <property type="entry name" value="ABC transporter type 1, transmembrane domain"/>
    <property type="match status" value="1"/>
</dbReference>
<dbReference type="Gene3D" id="3.40.50.300">
    <property type="entry name" value="P-loop containing nucleotide triphosphate hydrolases"/>
    <property type="match status" value="1"/>
</dbReference>
<dbReference type="InterPro" id="IPR003593">
    <property type="entry name" value="AAA+_ATPase"/>
</dbReference>
<dbReference type="InterPro" id="IPR011527">
    <property type="entry name" value="ABC1_TM_dom"/>
</dbReference>
<dbReference type="InterPro" id="IPR036640">
    <property type="entry name" value="ABC1_TM_sf"/>
</dbReference>
<dbReference type="InterPro" id="IPR003439">
    <property type="entry name" value="ABC_transporter-like_ATP-bd"/>
</dbReference>
<dbReference type="InterPro" id="IPR017871">
    <property type="entry name" value="ABC_transporter-like_CS"/>
</dbReference>
<dbReference type="InterPro" id="IPR011917">
    <property type="entry name" value="ABC_transpr_lipidA"/>
</dbReference>
<dbReference type="InterPro" id="IPR027417">
    <property type="entry name" value="P-loop_NTPase"/>
</dbReference>
<dbReference type="InterPro" id="IPR039421">
    <property type="entry name" value="Type_1_exporter"/>
</dbReference>
<dbReference type="NCBIfam" id="TIGR02203">
    <property type="entry name" value="MsbA_lipidA"/>
    <property type="match status" value="1"/>
</dbReference>
<dbReference type="PANTHER" id="PTHR43394:SF1">
    <property type="entry name" value="ATP-BINDING CASSETTE SUB-FAMILY B MEMBER 10, MITOCHONDRIAL"/>
    <property type="match status" value="1"/>
</dbReference>
<dbReference type="PANTHER" id="PTHR43394">
    <property type="entry name" value="ATP-DEPENDENT PERMEASE MDL1, MITOCHONDRIAL"/>
    <property type="match status" value="1"/>
</dbReference>
<dbReference type="Pfam" id="PF00664">
    <property type="entry name" value="ABC_membrane"/>
    <property type="match status" value="1"/>
</dbReference>
<dbReference type="Pfam" id="PF00005">
    <property type="entry name" value="ABC_tran"/>
    <property type="match status" value="1"/>
</dbReference>
<dbReference type="SMART" id="SM00382">
    <property type="entry name" value="AAA"/>
    <property type="match status" value="1"/>
</dbReference>
<dbReference type="SUPFAM" id="SSF90123">
    <property type="entry name" value="ABC transporter transmembrane region"/>
    <property type="match status" value="1"/>
</dbReference>
<dbReference type="SUPFAM" id="SSF52540">
    <property type="entry name" value="P-loop containing nucleoside triphosphate hydrolases"/>
    <property type="match status" value="1"/>
</dbReference>
<dbReference type="PROSITE" id="PS50929">
    <property type="entry name" value="ABC_TM1F"/>
    <property type="match status" value="1"/>
</dbReference>
<dbReference type="PROSITE" id="PS00211">
    <property type="entry name" value="ABC_TRANSPORTER_1"/>
    <property type="match status" value="1"/>
</dbReference>
<dbReference type="PROSITE" id="PS50893">
    <property type="entry name" value="ABC_TRANSPORTER_2"/>
    <property type="match status" value="1"/>
</dbReference>
<dbReference type="PROSITE" id="PS51239">
    <property type="entry name" value="MSBA"/>
    <property type="match status" value="1"/>
</dbReference>
<comment type="function">
    <text evidence="1">Involved in lipopolysaccharide (LPS) biosynthesis. Translocates lipid A-core from the inner to the outer leaflet of the inner membrane. Transmembrane domains (TMD) form a pore in the inner membrane and the ATP-binding domain (NBD) is responsible for energy generation.</text>
</comment>
<comment type="catalytic activity">
    <reaction evidence="1">
        <text>ATP + H2O + lipid A-core oligosaccharideSide 1 = ADP + phosphate + lipid A-core oligosaccharideSide 2.</text>
        <dbReference type="EC" id="7.5.2.6"/>
    </reaction>
</comment>
<comment type="subunit">
    <text evidence="1">Homodimer.</text>
</comment>
<comment type="subcellular location">
    <subcellularLocation>
        <location evidence="1">Cell inner membrane</location>
        <topology evidence="1">Multi-pass membrane protein</topology>
    </subcellularLocation>
</comment>
<comment type="domain">
    <text evidence="1">In MsbA the ATP-binding domain (NBD) and the transmembrane domain (TMD) are fused.</text>
</comment>
<comment type="similarity">
    <text evidence="1">Belongs to the ABC transporter superfamily. Lipid exporter (TC 3.A.1.106) family.</text>
</comment>
<accession>Q3J7R8</accession>
<evidence type="ECO:0000255" key="1">
    <source>
        <dbReference type="HAMAP-Rule" id="MF_01703"/>
    </source>
</evidence>
<name>MSBA_NITOC</name>
<keyword id="KW-0067">ATP-binding</keyword>
<keyword id="KW-0997">Cell inner membrane</keyword>
<keyword id="KW-1003">Cell membrane</keyword>
<keyword id="KW-0445">Lipid transport</keyword>
<keyword id="KW-0472">Membrane</keyword>
<keyword id="KW-0547">Nucleotide-binding</keyword>
<keyword id="KW-1185">Reference proteome</keyword>
<keyword id="KW-1278">Translocase</keyword>
<keyword id="KW-0812">Transmembrane</keyword>
<keyword id="KW-1133">Transmembrane helix</keyword>
<keyword id="KW-0813">Transport</keyword>
<sequence>MTFTPSLNSGLAVYRRLLSYTRPYRWIFAASIITMAIYAATETGLAALMKPLMDGSFIERDPATIQIIPLLLIGLFVIRGGANFITQYGLKWVARRVVRDLREQMFCHLLALPARYYDQKASGQLLAKLIYDVEQVSNAATDAILTIIRDSLTILGLLAWMAYLNGLLTLIILVTAPLIALIIWWVSHRFRRISRKIQNSMGDVSQVAQETIEGHREVKIFGGQTYEAERFDQVNEQNRRQTMKMAATDAISQPVVQLIAVLGLAGVIHLATRESMLAQISVGTFISFITAMMLLLGPVKRLTKINGTLQRGIAAAQSIFGLLAETPEADRGQQSLRRARGAIRFEHLSFCYEPAKGPVLENIDLEIKPYQTIALVGHSGSGKSTLVSLLARFYETTSGRILIDEMDIQTLRLTELRRQIALVSQQIILFNDTIAHNIAYGSYQQTSKQDIIRAAEAAHAMEFINRLPDGLDTVIGEKGVLLSGGQRQRLAIARALLKDAPILILDEATASLDTEAERHIQAALETLMRQRTTLVIAHRLSTVENADQIIVLHQGQIIERGTHSQLLARESHYAGLYRLQFRHSHEHVSPLSANVGL</sequence>
<proteinExistence type="inferred from homology"/>
<protein>
    <recommendedName>
        <fullName evidence="1">ATP-dependent lipid A-core flippase</fullName>
        <ecNumber evidence="1">7.5.2.6</ecNumber>
    </recommendedName>
    <alternativeName>
        <fullName evidence="1">Lipid A export ATP-binding/permease protein MsbA</fullName>
    </alternativeName>
</protein>
<feature type="chain" id="PRO_0000271635" description="ATP-dependent lipid A-core flippase">
    <location>
        <begin position="1"/>
        <end position="597"/>
    </location>
</feature>
<feature type="transmembrane region" description="Helical" evidence="1">
    <location>
        <begin position="26"/>
        <end position="46"/>
    </location>
</feature>
<feature type="transmembrane region" description="Helical" evidence="1">
    <location>
        <begin position="65"/>
        <end position="85"/>
    </location>
</feature>
<feature type="transmembrane region" description="Helical" evidence="1">
    <location>
        <begin position="144"/>
        <end position="164"/>
    </location>
</feature>
<feature type="transmembrane region" description="Helical" evidence="1">
    <location>
        <begin position="166"/>
        <end position="186"/>
    </location>
</feature>
<feature type="transmembrane region" description="Helical" evidence="1">
    <location>
        <begin position="250"/>
        <end position="270"/>
    </location>
</feature>
<feature type="transmembrane region" description="Helical" evidence="1">
    <location>
        <begin position="276"/>
        <end position="296"/>
    </location>
</feature>
<feature type="domain" description="ABC transmembrane type-1" evidence="1">
    <location>
        <begin position="29"/>
        <end position="311"/>
    </location>
</feature>
<feature type="domain" description="ABC transporter" evidence="1">
    <location>
        <begin position="343"/>
        <end position="579"/>
    </location>
</feature>
<feature type="binding site" evidence="1">
    <location>
        <begin position="377"/>
        <end position="384"/>
    </location>
    <ligand>
        <name>ATP</name>
        <dbReference type="ChEBI" id="CHEBI:30616"/>
    </ligand>
</feature>
<reference key="1">
    <citation type="journal article" date="2006" name="Appl. Environ. Microbiol.">
        <title>Complete genome sequence of the marine, chemolithoautotrophic, ammonia-oxidizing bacterium Nitrosococcus oceani ATCC 19707.</title>
        <authorList>
            <person name="Klotz M.G."/>
            <person name="Arp D.J."/>
            <person name="Chain P.S.G."/>
            <person name="El-Sheikh A.F."/>
            <person name="Hauser L.J."/>
            <person name="Hommes N.G."/>
            <person name="Larimer F.W."/>
            <person name="Malfatti S.A."/>
            <person name="Norton J.M."/>
            <person name="Poret-Peterson A.T."/>
            <person name="Vergez L.M."/>
            <person name="Ward B.B."/>
        </authorList>
    </citation>
    <scope>NUCLEOTIDE SEQUENCE [LARGE SCALE GENOMIC DNA]</scope>
    <source>
        <strain>ATCC 19707 / BCRC 17464 / JCM 30415 / NCIMB 11848 / C-107</strain>
    </source>
</reference>
<gene>
    <name evidence="1" type="primary">msbA</name>
    <name type="ordered locus">Noc_2675</name>
</gene>
<organism>
    <name type="scientific">Nitrosococcus oceani (strain ATCC 19707 / BCRC 17464 / JCM 30415 / NCIMB 11848 / C-107)</name>
    <dbReference type="NCBI Taxonomy" id="323261"/>
    <lineage>
        <taxon>Bacteria</taxon>
        <taxon>Pseudomonadati</taxon>
        <taxon>Pseudomonadota</taxon>
        <taxon>Gammaproteobacteria</taxon>
        <taxon>Chromatiales</taxon>
        <taxon>Chromatiaceae</taxon>
        <taxon>Nitrosococcus</taxon>
    </lineage>
</organism>